<organism>
    <name type="scientific">Triticum aestivum</name>
    <name type="common">Wheat</name>
    <dbReference type="NCBI Taxonomy" id="4565"/>
    <lineage>
        <taxon>Eukaryota</taxon>
        <taxon>Viridiplantae</taxon>
        <taxon>Streptophyta</taxon>
        <taxon>Embryophyta</taxon>
        <taxon>Tracheophyta</taxon>
        <taxon>Spermatophyta</taxon>
        <taxon>Magnoliopsida</taxon>
        <taxon>Liliopsida</taxon>
        <taxon>Poales</taxon>
        <taxon>Poaceae</taxon>
        <taxon>BOP clade</taxon>
        <taxon>Pooideae</taxon>
        <taxon>Triticodae</taxon>
        <taxon>Triticeae</taxon>
        <taxon>Triticinae</taxon>
        <taxon>Triticum</taxon>
    </lineage>
</organism>
<proteinExistence type="evidence at transcript level"/>
<keyword id="KW-0020">Allergen</keyword>
<keyword id="KW-1185">Reference proteome</keyword>
<keyword id="KW-0677">Repeat</keyword>
<keyword id="KW-0708">Seed storage protein</keyword>
<keyword id="KW-0732">Signal</keyword>
<keyword id="KW-0758">Storage protein</keyword>
<evidence type="ECO:0000250" key="1"/>
<evidence type="ECO:0000256" key="2">
    <source>
        <dbReference type="SAM" id="MobiDB-lite"/>
    </source>
</evidence>
<evidence type="ECO:0000305" key="3"/>
<name>GDA4_WHEAT</name>
<reference key="1">
    <citation type="journal article" date="1985" name="J. Biol. Chem.">
        <title>Evolution and heterogeneity of the alpha-/beta-type and gamma-type gliadin DNA sequences.</title>
        <authorList>
            <person name="Okita T.W."/>
            <person name="Cheesbrough V."/>
            <person name="Reeves C.D."/>
        </authorList>
    </citation>
    <scope>NUCLEOTIDE SEQUENCE [MRNA]</scope>
</reference>
<dbReference type="EMBL" id="M11075">
    <property type="protein sequence ID" value="AAA34282.1"/>
    <property type="molecule type" value="mRNA"/>
</dbReference>
<dbReference type="PIR" id="D22364">
    <property type="entry name" value="D22364"/>
</dbReference>
<dbReference type="PIR" id="T06500">
    <property type="entry name" value="T06500"/>
</dbReference>
<dbReference type="STRING" id="4565.P04724"/>
<dbReference type="PaxDb" id="4565-Traes_4AL_4FF5B8837.1"/>
<dbReference type="Proteomes" id="UP000019116">
    <property type="component" value="Unplaced"/>
</dbReference>
<dbReference type="ExpressionAtlas" id="P04724">
    <property type="expression patterns" value="baseline"/>
</dbReference>
<dbReference type="GO" id="GO:0045735">
    <property type="term" value="F:nutrient reservoir activity"/>
    <property type="evidence" value="ECO:0007669"/>
    <property type="project" value="UniProtKB-KW"/>
</dbReference>
<dbReference type="CDD" id="cd00261">
    <property type="entry name" value="AAI_SS"/>
    <property type="match status" value="1"/>
</dbReference>
<dbReference type="Gene3D" id="1.10.110.10">
    <property type="entry name" value="Plant lipid-transfer and hydrophobic proteins"/>
    <property type="match status" value="1"/>
</dbReference>
<dbReference type="InterPro" id="IPR036312">
    <property type="entry name" value="Bifun_inhib/LTP/seed_sf"/>
</dbReference>
<dbReference type="InterPro" id="IPR016140">
    <property type="entry name" value="Bifunc_inhib/LTP/seed_store"/>
</dbReference>
<dbReference type="InterPro" id="IPR001954">
    <property type="entry name" value="Glia_glutenin"/>
</dbReference>
<dbReference type="PANTHER" id="PTHR33454:SF7">
    <property type="entry name" value="ALPHA_BETA-GLIADIN MM1"/>
    <property type="match status" value="1"/>
</dbReference>
<dbReference type="PANTHER" id="PTHR33454">
    <property type="entry name" value="PROLAMIN PPROL 14P"/>
    <property type="match status" value="1"/>
</dbReference>
<dbReference type="Pfam" id="PF13016">
    <property type="entry name" value="Gliadin"/>
    <property type="match status" value="1"/>
</dbReference>
<dbReference type="PRINTS" id="PR00208">
    <property type="entry name" value="GLIADGLUTEN"/>
</dbReference>
<dbReference type="PRINTS" id="PR00209">
    <property type="entry name" value="GLIADIN"/>
</dbReference>
<dbReference type="SMART" id="SM00499">
    <property type="entry name" value="AAI"/>
    <property type="match status" value="1"/>
</dbReference>
<dbReference type="SUPFAM" id="SSF47699">
    <property type="entry name" value="Bifunctional inhibitor/lipid-transfer protein/seed storage 2S albumin"/>
    <property type="match status" value="1"/>
</dbReference>
<sequence length="297" mass="34239">MKTFLILALRAIVATTATIAVRVPVPQLQPQNPSQQQPQKQVPLVQQQQFPGQQQPFPPQQPYPQQQPFPSQQPYMQLQPFPQPQLPYPQPQLPYPQPQPFRPQQSYPQPQPQYSQPQQPISQQQQQQQQQQQQQQQILQQILQQQLIPCRDVVLQQHSIAHGSSQVLQQSTYQLVQQFCCQQLWQIPEQSRCQAIHNVVHAIILHQQQQQQQQQQQQQQQPLSQVCFQQSQQQYPSGQGSFQPSQQNPQAQGSVQPQQLPQFEEIRNLALETLPAMCNVYIPPYCTIAPVGIFGTN</sequence>
<feature type="signal peptide">
    <location>
        <begin position="1"/>
        <end position="20"/>
    </location>
</feature>
<feature type="chain" id="PRO_0000032271" description="Alpha/beta-gliadin A-IV">
    <location>
        <begin position="21"/>
        <end position="297"/>
    </location>
</feature>
<feature type="region of interest" description="Disordered" evidence="2">
    <location>
        <begin position="29"/>
        <end position="127"/>
    </location>
</feature>
<feature type="region of interest" description="Disordered" evidence="2">
    <location>
        <begin position="234"/>
        <end position="257"/>
    </location>
</feature>
<feature type="compositionally biased region" description="Low complexity" evidence="2">
    <location>
        <begin position="29"/>
        <end position="55"/>
    </location>
</feature>
<feature type="compositionally biased region" description="Pro residues" evidence="2">
    <location>
        <begin position="56"/>
        <end position="67"/>
    </location>
</feature>
<feature type="compositionally biased region" description="Low complexity" evidence="2">
    <location>
        <begin position="68"/>
        <end position="80"/>
    </location>
</feature>
<feature type="compositionally biased region" description="Pro residues" evidence="2">
    <location>
        <begin position="81"/>
        <end position="101"/>
    </location>
</feature>
<feature type="compositionally biased region" description="Low complexity" evidence="2">
    <location>
        <begin position="102"/>
        <end position="127"/>
    </location>
</feature>
<feature type="compositionally biased region" description="Low complexity" evidence="2">
    <location>
        <begin position="234"/>
        <end position="250"/>
    </location>
</feature>
<comment type="function">
    <text>Gliadin is the major seed storage protein in wheat.</text>
</comment>
<comment type="PTM">
    <text evidence="1">Substrate of transglutaminase.</text>
</comment>
<comment type="allergen">
    <text evidence="1">Causes an allergic reaction in human. Is the cause of the celiac disease, also known as celiac sprue or gluten-sensitive enteropathy (By similarity).</text>
</comment>
<comment type="miscellaneous">
    <text>The alpha/beta-gliadins can be divided into 5 homology classes. Sequence divergence between the classes is due to single base substitutions and to duplications or deletions within or near direct repeats. There are more than a 100 copies of the gene for alpha/beta-gliadin per haploid genome.</text>
</comment>
<comment type="similarity">
    <text evidence="3">Belongs to the gliadin/glutenin family.</text>
</comment>
<accession>P04724</accession>
<protein>
    <recommendedName>
        <fullName>Alpha/beta-gliadin A-IV</fullName>
    </recommendedName>
    <alternativeName>
        <fullName>Prolamin</fullName>
    </alternativeName>
</protein>